<evidence type="ECO:0000255" key="1">
    <source>
        <dbReference type="HAMAP-Rule" id="MF_01320"/>
    </source>
</evidence>
<evidence type="ECO:0000256" key="2">
    <source>
        <dbReference type="SAM" id="MobiDB-lite"/>
    </source>
</evidence>
<evidence type="ECO:0000305" key="3"/>
<dbReference type="EMBL" id="CP000854">
    <property type="protein sequence ID" value="ACC39492.1"/>
    <property type="molecule type" value="Genomic_DNA"/>
</dbReference>
<dbReference type="RefSeq" id="WP_012392941.1">
    <property type="nucleotide sequence ID" value="NC_010612.1"/>
</dbReference>
<dbReference type="SMR" id="B2HSN4"/>
<dbReference type="STRING" id="216594.MMAR_1034"/>
<dbReference type="KEGG" id="mmi:MMAR_1034"/>
<dbReference type="eggNOG" id="COG0090">
    <property type="taxonomic scope" value="Bacteria"/>
</dbReference>
<dbReference type="HOGENOM" id="CLU_036235_2_1_11"/>
<dbReference type="OrthoDB" id="9778722at2"/>
<dbReference type="Proteomes" id="UP000001190">
    <property type="component" value="Chromosome"/>
</dbReference>
<dbReference type="GO" id="GO:0015934">
    <property type="term" value="C:large ribosomal subunit"/>
    <property type="evidence" value="ECO:0007669"/>
    <property type="project" value="InterPro"/>
</dbReference>
<dbReference type="GO" id="GO:0019843">
    <property type="term" value="F:rRNA binding"/>
    <property type="evidence" value="ECO:0007669"/>
    <property type="project" value="UniProtKB-UniRule"/>
</dbReference>
<dbReference type="GO" id="GO:0003735">
    <property type="term" value="F:structural constituent of ribosome"/>
    <property type="evidence" value="ECO:0007669"/>
    <property type="project" value="InterPro"/>
</dbReference>
<dbReference type="GO" id="GO:0016740">
    <property type="term" value="F:transferase activity"/>
    <property type="evidence" value="ECO:0007669"/>
    <property type="project" value="InterPro"/>
</dbReference>
<dbReference type="GO" id="GO:0002181">
    <property type="term" value="P:cytoplasmic translation"/>
    <property type="evidence" value="ECO:0007669"/>
    <property type="project" value="TreeGrafter"/>
</dbReference>
<dbReference type="FunFam" id="2.30.30.30:FF:000001">
    <property type="entry name" value="50S ribosomal protein L2"/>
    <property type="match status" value="1"/>
</dbReference>
<dbReference type="FunFam" id="2.40.50.140:FF:000003">
    <property type="entry name" value="50S ribosomal protein L2"/>
    <property type="match status" value="1"/>
</dbReference>
<dbReference type="FunFam" id="4.10.950.10:FF:000001">
    <property type="entry name" value="50S ribosomal protein L2"/>
    <property type="match status" value="1"/>
</dbReference>
<dbReference type="Gene3D" id="2.30.30.30">
    <property type="match status" value="1"/>
</dbReference>
<dbReference type="Gene3D" id="2.40.50.140">
    <property type="entry name" value="Nucleic acid-binding proteins"/>
    <property type="match status" value="1"/>
</dbReference>
<dbReference type="Gene3D" id="4.10.950.10">
    <property type="entry name" value="Ribosomal protein L2, domain 3"/>
    <property type="match status" value="1"/>
</dbReference>
<dbReference type="HAMAP" id="MF_01320_B">
    <property type="entry name" value="Ribosomal_uL2_B"/>
    <property type="match status" value="1"/>
</dbReference>
<dbReference type="InterPro" id="IPR012340">
    <property type="entry name" value="NA-bd_OB-fold"/>
</dbReference>
<dbReference type="InterPro" id="IPR014722">
    <property type="entry name" value="Rib_uL2_dom2"/>
</dbReference>
<dbReference type="InterPro" id="IPR002171">
    <property type="entry name" value="Ribosomal_uL2"/>
</dbReference>
<dbReference type="InterPro" id="IPR005880">
    <property type="entry name" value="Ribosomal_uL2_bac/org-type"/>
</dbReference>
<dbReference type="InterPro" id="IPR022669">
    <property type="entry name" value="Ribosomal_uL2_C"/>
</dbReference>
<dbReference type="InterPro" id="IPR022671">
    <property type="entry name" value="Ribosomal_uL2_CS"/>
</dbReference>
<dbReference type="InterPro" id="IPR014726">
    <property type="entry name" value="Ribosomal_uL2_dom3"/>
</dbReference>
<dbReference type="InterPro" id="IPR022666">
    <property type="entry name" value="Ribosomal_uL2_RNA-bd_dom"/>
</dbReference>
<dbReference type="InterPro" id="IPR008991">
    <property type="entry name" value="Translation_prot_SH3-like_sf"/>
</dbReference>
<dbReference type="NCBIfam" id="TIGR01171">
    <property type="entry name" value="rplB_bact"/>
    <property type="match status" value="1"/>
</dbReference>
<dbReference type="PANTHER" id="PTHR13691:SF5">
    <property type="entry name" value="LARGE RIBOSOMAL SUBUNIT PROTEIN UL2M"/>
    <property type="match status" value="1"/>
</dbReference>
<dbReference type="PANTHER" id="PTHR13691">
    <property type="entry name" value="RIBOSOMAL PROTEIN L2"/>
    <property type="match status" value="1"/>
</dbReference>
<dbReference type="Pfam" id="PF00181">
    <property type="entry name" value="Ribosomal_L2"/>
    <property type="match status" value="1"/>
</dbReference>
<dbReference type="Pfam" id="PF03947">
    <property type="entry name" value="Ribosomal_L2_C"/>
    <property type="match status" value="1"/>
</dbReference>
<dbReference type="PIRSF" id="PIRSF002158">
    <property type="entry name" value="Ribosomal_L2"/>
    <property type="match status" value="1"/>
</dbReference>
<dbReference type="SMART" id="SM01383">
    <property type="entry name" value="Ribosomal_L2"/>
    <property type="match status" value="1"/>
</dbReference>
<dbReference type="SMART" id="SM01382">
    <property type="entry name" value="Ribosomal_L2_C"/>
    <property type="match status" value="1"/>
</dbReference>
<dbReference type="SUPFAM" id="SSF50249">
    <property type="entry name" value="Nucleic acid-binding proteins"/>
    <property type="match status" value="1"/>
</dbReference>
<dbReference type="SUPFAM" id="SSF50104">
    <property type="entry name" value="Translation proteins SH3-like domain"/>
    <property type="match status" value="1"/>
</dbReference>
<dbReference type="PROSITE" id="PS00467">
    <property type="entry name" value="RIBOSOMAL_L2"/>
    <property type="match status" value="1"/>
</dbReference>
<organism>
    <name type="scientific">Mycobacterium marinum (strain ATCC BAA-535 / M)</name>
    <dbReference type="NCBI Taxonomy" id="216594"/>
    <lineage>
        <taxon>Bacteria</taxon>
        <taxon>Bacillati</taxon>
        <taxon>Actinomycetota</taxon>
        <taxon>Actinomycetes</taxon>
        <taxon>Mycobacteriales</taxon>
        <taxon>Mycobacteriaceae</taxon>
        <taxon>Mycobacterium</taxon>
        <taxon>Mycobacterium ulcerans group</taxon>
    </lineage>
</organism>
<protein>
    <recommendedName>
        <fullName evidence="1">Large ribosomal subunit protein uL2</fullName>
    </recommendedName>
    <alternativeName>
        <fullName evidence="3">50S ribosomal protein L2</fullName>
    </alternativeName>
</protein>
<name>RL2_MYCMM</name>
<comment type="function">
    <text evidence="1">One of the primary rRNA binding proteins. Required for association of the 30S and 50S subunits to form the 70S ribosome, for tRNA binding and peptide bond formation. It has been suggested to have peptidyltransferase activity; this is somewhat controversial. Makes several contacts with the 16S rRNA in the 70S ribosome.</text>
</comment>
<comment type="subunit">
    <text evidence="1">Part of the 50S ribosomal subunit. Forms a bridge to the 30S subunit in the 70S ribosome.</text>
</comment>
<comment type="similarity">
    <text evidence="1">Belongs to the universal ribosomal protein uL2 family.</text>
</comment>
<proteinExistence type="inferred from homology"/>
<gene>
    <name evidence="1" type="primary">rplB</name>
    <name type="ordered locus">MMAR_1034</name>
</gene>
<sequence>MAIRKYKPTTPGRRGASVSDFAEITRSTPEKSLVRPLHGHGGRNAHGRITTRHKGGGHKRAYRVIDFRRNDKDGVNAKVAHIEYDPNRTARIALLHYLDGEKRYIIAPNGLSQGDVVESGANADIKPGNNLPLRNIPAGTLVHAVELRPGGGAKLARSAGSSIQLLGKEASYASLRMPSGEIRRVDVRCRATVGEVGNAEQANINWGKAGRMRWKGKRPSVRGVVMNPVDHPHGGGEGKTSGGRHPVSPWGKPEGRTRNPNKASNKLIVRRRRTGKKHGR</sequence>
<reference key="1">
    <citation type="journal article" date="2008" name="Genome Res.">
        <title>Insights from the complete genome sequence of Mycobacterium marinum on the evolution of Mycobacterium tuberculosis.</title>
        <authorList>
            <person name="Stinear T.P."/>
            <person name="Seemann T."/>
            <person name="Harrison P.F."/>
            <person name="Jenkin G.A."/>
            <person name="Davies J.K."/>
            <person name="Johnson P.D."/>
            <person name="Abdellah Z."/>
            <person name="Arrowsmith C."/>
            <person name="Chillingworth T."/>
            <person name="Churcher C."/>
            <person name="Clarke K."/>
            <person name="Cronin A."/>
            <person name="Davis P."/>
            <person name="Goodhead I."/>
            <person name="Holroyd N."/>
            <person name="Jagels K."/>
            <person name="Lord A."/>
            <person name="Moule S."/>
            <person name="Mungall K."/>
            <person name="Norbertczak H."/>
            <person name="Quail M.A."/>
            <person name="Rabbinowitsch E."/>
            <person name="Walker D."/>
            <person name="White B."/>
            <person name="Whitehead S."/>
            <person name="Small P.L."/>
            <person name="Brosch R."/>
            <person name="Ramakrishnan L."/>
            <person name="Fischbach M.A."/>
            <person name="Parkhill J."/>
            <person name="Cole S.T."/>
        </authorList>
    </citation>
    <scope>NUCLEOTIDE SEQUENCE [LARGE SCALE GENOMIC DNA]</scope>
    <source>
        <strain>ATCC BAA-535 / M</strain>
    </source>
</reference>
<keyword id="KW-1185">Reference proteome</keyword>
<keyword id="KW-0687">Ribonucleoprotein</keyword>
<keyword id="KW-0689">Ribosomal protein</keyword>
<keyword id="KW-0694">RNA-binding</keyword>
<keyword id="KW-0699">rRNA-binding</keyword>
<feature type="chain" id="PRO_1000141585" description="Large ribosomal subunit protein uL2">
    <location>
        <begin position="1"/>
        <end position="280"/>
    </location>
</feature>
<feature type="region of interest" description="Disordered" evidence="2">
    <location>
        <begin position="27"/>
        <end position="58"/>
    </location>
</feature>
<feature type="region of interest" description="Disordered" evidence="2">
    <location>
        <begin position="226"/>
        <end position="280"/>
    </location>
</feature>
<feature type="compositionally biased region" description="Basic residues" evidence="2">
    <location>
        <begin position="37"/>
        <end position="58"/>
    </location>
</feature>
<feature type="compositionally biased region" description="Basic residues" evidence="2">
    <location>
        <begin position="268"/>
        <end position="280"/>
    </location>
</feature>
<accession>B2HSN4</accession>